<accession>B7VA62</accession>
<dbReference type="EMBL" id="FM209186">
    <property type="protein sequence ID" value="CAW28007.1"/>
    <property type="molecule type" value="Genomic_DNA"/>
</dbReference>
<dbReference type="RefSeq" id="WP_003106499.1">
    <property type="nucleotide sequence ID" value="NC_011770.1"/>
</dbReference>
<dbReference type="SMR" id="B7VA62"/>
<dbReference type="KEGG" id="pag:PLES_32801"/>
<dbReference type="HOGENOM" id="CLU_044581_0_0_6"/>
<dbReference type="GO" id="GO:0005886">
    <property type="term" value="C:plasma membrane"/>
    <property type="evidence" value="ECO:0007669"/>
    <property type="project" value="UniProtKB-SubCell"/>
</dbReference>
<dbReference type="GO" id="GO:0005295">
    <property type="term" value="F:neutral L-amino acid:sodium symporter activity"/>
    <property type="evidence" value="ECO:0007669"/>
    <property type="project" value="TreeGrafter"/>
</dbReference>
<dbReference type="GO" id="GO:0032329">
    <property type="term" value="P:serine transport"/>
    <property type="evidence" value="ECO:0007669"/>
    <property type="project" value="InterPro"/>
</dbReference>
<dbReference type="GO" id="GO:0015826">
    <property type="term" value="P:threonine transport"/>
    <property type="evidence" value="ECO:0007669"/>
    <property type="project" value="InterPro"/>
</dbReference>
<dbReference type="FunFam" id="1.10.3860.10:FF:000003">
    <property type="entry name" value="Serine/threonine transporter sstT"/>
    <property type="match status" value="1"/>
</dbReference>
<dbReference type="Gene3D" id="1.10.3860.10">
    <property type="entry name" value="Sodium:dicarboxylate symporter"/>
    <property type="match status" value="1"/>
</dbReference>
<dbReference type="HAMAP" id="MF_01582">
    <property type="entry name" value="Ser_Thr_transp_SstT"/>
    <property type="match status" value="1"/>
</dbReference>
<dbReference type="InterPro" id="IPR001991">
    <property type="entry name" value="Na-dicarboxylate_symporter"/>
</dbReference>
<dbReference type="InterPro" id="IPR036458">
    <property type="entry name" value="Na:dicarbo_symporter_sf"/>
</dbReference>
<dbReference type="InterPro" id="IPR023025">
    <property type="entry name" value="Ser_Thr_transp_SstT"/>
</dbReference>
<dbReference type="NCBIfam" id="NF010151">
    <property type="entry name" value="PRK13628.1"/>
    <property type="match status" value="1"/>
</dbReference>
<dbReference type="PANTHER" id="PTHR42865">
    <property type="entry name" value="PROTON/GLUTAMATE-ASPARTATE SYMPORTER"/>
    <property type="match status" value="1"/>
</dbReference>
<dbReference type="PANTHER" id="PTHR42865:SF8">
    <property type="entry name" value="SERINE_THREONINE TRANSPORTER SSTT"/>
    <property type="match status" value="1"/>
</dbReference>
<dbReference type="Pfam" id="PF00375">
    <property type="entry name" value="SDF"/>
    <property type="match status" value="1"/>
</dbReference>
<dbReference type="PRINTS" id="PR00173">
    <property type="entry name" value="EDTRNSPORT"/>
</dbReference>
<dbReference type="SUPFAM" id="SSF118215">
    <property type="entry name" value="Proton glutamate symport protein"/>
    <property type="match status" value="1"/>
</dbReference>
<feature type="chain" id="PRO_1000197556" description="Serine/threonine transporter SstT">
    <location>
        <begin position="1"/>
        <end position="409"/>
    </location>
</feature>
<feature type="transmembrane region" description="Helical" evidence="1">
    <location>
        <begin position="17"/>
        <end position="37"/>
    </location>
</feature>
<feature type="transmembrane region" description="Helical" evidence="1">
    <location>
        <begin position="49"/>
        <end position="69"/>
    </location>
</feature>
<feature type="transmembrane region" description="Helical" evidence="1">
    <location>
        <begin position="83"/>
        <end position="103"/>
    </location>
</feature>
<feature type="transmembrane region" description="Helical" evidence="1">
    <location>
        <begin position="142"/>
        <end position="162"/>
    </location>
</feature>
<feature type="transmembrane region" description="Helical" evidence="1">
    <location>
        <begin position="180"/>
        <end position="200"/>
    </location>
</feature>
<feature type="transmembrane region" description="Helical" evidence="1">
    <location>
        <begin position="218"/>
        <end position="238"/>
    </location>
</feature>
<feature type="transmembrane region" description="Helical" evidence="1">
    <location>
        <begin position="301"/>
        <end position="321"/>
    </location>
</feature>
<feature type="transmembrane region" description="Helical" evidence="1">
    <location>
        <begin position="331"/>
        <end position="351"/>
    </location>
</feature>
<feature type="transmembrane region" description="Helical" evidence="1">
    <location>
        <begin position="357"/>
        <end position="377"/>
    </location>
</feature>
<gene>
    <name evidence="1" type="primary">sstT</name>
    <name type="ordered locus">PLES_32801</name>
</gene>
<reference key="1">
    <citation type="journal article" date="2009" name="Genome Res.">
        <title>Newly introduced genomic prophage islands are critical determinants of in vivo competitiveness in the Liverpool epidemic strain of Pseudomonas aeruginosa.</title>
        <authorList>
            <person name="Winstanley C."/>
            <person name="Langille M.G.I."/>
            <person name="Fothergill J.L."/>
            <person name="Kukavica-Ibrulj I."/>
            <person name="Paradis-Bleau C."/>
            <person name="Sanschagrin F."/>
            <person name="Thomson N.R."/>
            <person name="Winsor G.L."/>
            <person name="Quail M.A."/>
            <person name="Lennard N."/>
            <person name="Bignell A."/>
            <person name="Clarke L."/>
            <person name="Seeger K."/>
            <person name="Saunders D."/>
            <person name="Harris D."/>
            <person name="Parkhill J."/>
            <person name="Hancock R.E.W."/>
            <person name="Brinkman F.S.L."/>
            <person name="Levesque R.C."/>
        </authorList>
    </citation>
    <scope>NUCLEOTIDE SEQUENCE [LARGE SCALE GENOMIC DNA]</scope>
    <source>
        <strain>LESB58</strain>
    </source>
</reference>
<protein>
    <recommendedName>
        <fullName evidence="1">Serine/threonine transporter SstT</fullName>
    </recommendedName>
    <alternativeName>
        <fullName evidence="1">Na(+)/serine-threonine symporter</fullName>
    </alternativeName>
</protein>
<sequence length="409" mass="42444">MTYPERPLLHLLTRTSLVGQIIVGLIAGLLLASFFPAAALKVGFIGKVFVSALKAVAPVLVFVLVMASIANHRQGQQTHIRPILLLYLVGTFSAAVVAVIASFAFPSSLVLASHPGEMSPPGGIAEVLQSLLLSVVDNPVNALISANFIGILAWAIGLGIAFRHASDTTRNLLSELSNGVSLIVKVVIRFAPLGIFGLVASTFAESGVEALKGYAHLLVVLLGCMLFVAFVVNPLIVFLKIRRNPYPLVLTCLRESGMTAFFTRSSAANIPVNLQLCERLGLHEDTYSVSIPLGATINMAGAAITITVLTLAAVHTLGIAVDVPTAILLSVVASICACGASGVAGGSLLLIPLACSLFGIPSEVAMQVVAVGFIIAILQDSAETALNSSTDVLFTAAACEAEERKASAA</sequence>
<proteinExistence type="inferred from homology"/>
<organism>
    <name type="scientific">Pseudomonas aeruginosa (strain LESB58)</name>
    <dbReference type="NCBI Taxonomy" id="557722"/>
    <lineage>
        <taxon>Bacteria</taxon>
        <taxon>Pseudomonadati</taxon>
        <taxon>Pseudomonadota</taxon>
        <taxon>Gammaproteobacteria</taxon>
        <taxon>Pseudomonadales</taxon>
        <taxon>Pseudomonadaceae</taxon>
        <taxon>Pseudomonas</taxon>
    </lineage>
</organism>
<evidence type="ECO:0000255" key="1">
    <source>
        <dbReference type="HAMAP-Rule" id="MF_01582"/>
    </source>
</evidence>
<comment type="function">
    <text evidence="1">Involved in the import of serine and threonine into the cell, with the concomitant import of sodium (symport system).</text>
</comment>
<comment type="catalytic activity">
    <reaction evidence="1">
        <text>L-serine(in) + Na(+)(in) = L-serine(out) + Na(+)(out)</text>
        <dbReference type="Rhea" id="RHEA:29575"/>
        <dbReference type="ChEBI" id="CHEBI:29101"/>
        <dbReference type="ChEBI" id="CHEBI:33384"/>
    </reaction>
    <physiologicalReaction direction="right-to-left" evidence="1">
        <dbReference type="Rhea" id="RHEA:29577"/>
    </physiologicalReaction>
</comment>
<comment type="catalytic activity">
    <reaction evidence="1">
        <text>L-threonine(in) + Na(+)(in) = L-threonine(out) + Na(+)(out)</text>
        <dbReference type="Rhea" id="RHEA:69999"/>
        <dbReference type="ChEBI" id="CHEBI:29101"/>
        <dbReference type="ChEBI" id="CHEBI:57926"/>
    </reaction>
    <physiologicalReaction direction="right-to-left" evidence="1">
        <dbReference type="Rhea" id="RHEA:70001"/>
    </physiologicalReaction>
</comment>
<comment type="subcellular location">
    <subcellularLocation>
        <location evidence="1">Cell inner membrane</location>
        <topology evidence="1">Multi-pass membrane protein</topology>
    </subcellularLocation>
</comment>
<comment type="similarity">
    <text evidence="1">Belongs to the dicarboxylate/amino acid:cation symporter (DAACS) (TC 2.A.23) family.</text>
</comment>
<keyword id="KW-0029">Amino-acid transport</keyword>
<keyword id="KW-0997">Cell inner membrane</keyword>
<keyword id="KW-1003">Cell membrane</keyword>
<keyword id="KW-0472">Membrane</keyword>
<keyword id="KW-0769">Symport</keyword>
<keyword id="KW-0812">Transmembrane</keyword>
<keyword id="KW-1133">Transmembrane helix</keyword>
<keyword id="KW-0813">Transport</keyword>
<name>SSTT_PSEA8</name>